<accession>A0A1P8NVR5</accession>
<keyword id="KW-0027">Amidation</keyword>
<keyword id="KW-0208">D-amino acid</keyword>
<keyword id="KW-0903">Direct protein sequencing</keyword>
<keyword id="KW-1015">Disulfide bond</keyword>
<keyword id="KW-0301">Gamma-carboxyglutamic acid</keyword>
<keyword id="KW-0872">Ion channel impairing toxin</keyword>
<keyword id="KW-0528">Neurotoxin</keyword>
<keyword id="KW-0964">Secreted</keyword>
<keyword id="KW-0732">Signal</keyword>
<keyword id="KW-0800">Toxin</keyword>
<dbReference type="EMBL" id="KX289876">
    <property type="protein sequence ID" value="APX52853.1"/>
    <property type="molecule type" value="mRNA"/>
</dbReference>
<dbReference type="ConoServer" id="9752">
    <property type="toxin name" value="Contryphan-Ar2 precursor"/>
</dbReference>
<dbReference type="GO" id="GO:0005576">
    <property type="term" value="C:extracellular region"/>
    <property type="evidence" value="ECO:0007669"/>
    <property type="project" value="UniProtKB-SubCell"/>
</dbReference>
<dbReference type="GO" id="GO:0008200">
    <property type="term" value="F:ion channel inhibitor activity"/>
    <property type="evidence" value="ECO:0007669"/>
    <property type="project" value="InterPro"/>
</dbReference>
<dbReference type="GO" id="GO:0090729">
    <property type="term" value="F:toxin activity"/>
    <property type="evidence" value="ECO:0007669"/>
    <property type="project" value="UniProtKB-KW"/>
</dbReference>
<dbReference type="InterPro" id="IPR004214">
    <property type="entry name" value="Conotoxin"/>
</dbReference>
<dbReference type="InterPro" id="IPR011062">
    <property type="entry name" value="Contryphan_CS"/>
</dbReference>
<dbReference type="Pfam" id="PF02950">
    <property type="entry name" value="Conotoxin"/>
    <property type="match status" value="1"/>
</dbReference>
<dbReference type="PROSITE" id="PS60027">
    <property type="entry name" value="CONTRYPHAN"/>
    <property type="match status" value="1"/>
</dbReference>
<protein>
    <recommendedName>
        <fullName evidence="8">Contryphan-Ar2</fullName>
    </recommendedName>
    <alternativeName>
        <fullName evidence="7">Ar1260</fullName>
    </alternativeName>
    <alternativeName>
        <fullName evidence="7">Ar1304</fullName>
    </alternativeName>
    <component>
        <recommendedName>
            <fullName evidence="8">Contryphan-Ar1</fullName>
        </recommendedName>
        <alternativeName>
            <fullName evidence="7">Ar1131</fullName>
        </alternativeName>
        <alternativeName>
            <fullName evidence="7">Ar1175</fullName>
        </alternativeName>
    </component>
</protein>
<comment type="function">
    <text evidence="1 2 3 4">Its target is unknown, but this toxin may modulate voltage-activated calcium channels (Cav) or calcium-dependent potassium channels (KCa).</text>
</comment>
<comment type="subcellular location">
    <subcellularLocation>
        <location evidence="6">Secreted</location>
    </subcellularLocation>
</comment>
<comment type="tissue specificity">
    <text evidence="9">Expressed by the venom duct.</text>
</comment>
<comment type="domain">
    <text evidence="8">The cysteine framework is C-C.</text>
</comment>
<comment type="mass spectrometry" mass="1260.62" method="MALDI" evidence="6">
    <molecule>Contryphan-Ar2</molecule>
    <text>Monoisotopic mass, Ar1260.</text>
</comment>
<comment type="mass spectrometry" mass="1304.6" method="MALDI" evidence="6">
    <molecule>Contryphan-Ar2</molecule>
    <text>Monoisotopic mass, Ar1304 (gamma-carboxylated).</text>
</comment>
<comment type="mass spectrometry" mass="1131.58" method="MALDI" evidence="6">
    <molecule>Contryphan-Ar1</molecule>
    <text>Monoisotopic mass, Ar1131.</text>
</comment>
<comment type="mass spectrometry" mass="1175.56" method="MALDI" evidence="6">
    <molecule>Contryphan-Ar1</molecule>
    <text>Monoisotopic mass, Ar1175 (gamma-carboxylated).</text>
</comment>
<comment type="similarity">
    <text evidence="8">Belongs to the O2 superfamily. Contryphan family.</text>
</comment>
<proteinExistence type="evidence at protein level"/>
<reference key="1">
    <citation type="journal article" date="2017" name="J. Proteome Res.">
        <title>Contryphan genes and mature peptides in the venom of nine cone snail species by transcriptomic and mass spectrometric analysis.</title>
        <authorList>
            <person name="Vijayasarathy M."/>
            <person name="Basheer S.M."/>
            <person name="Franklin J.B."/>
            <person name="Balaram P."/>
        </authorList>
    </citation>
    <scope>NUCLEOTIDE SEQUENCE [MRNA]</scope>
    <scope>PROTEIN SEQUENCE OF 53-62 AND 54-62</scope>
    <scope>IDENTIFICATION BY MASS SPECTROMETRY</scope>
    <scope>MASS SPECTROMETRY</scope>
    <scope>SUBCELLULAR LOCATION</scope>
    <scope>DISULFIDE BOND</scope>
    <scope>D-AMINO ACID AT TRP-58</scope>
    <scope>AMIDATION AT CYS-62</scope>
    <scope>GAMMA-CARBOXYGLUTAMATION AT GLU-55</scope>
    <source>
        <tissue>Venom</tissue>
        <tissue>Venom duct</tissue>
    </source>
</reference>
<feature type="signal peptide" evidence="5">
    <location>
        <begin position="1"/>
        <end position="23"/>
    </location>
</feature>
<feature type="propeptide" id="PRO_0000445125" evidence="9">
    <location>
        <begin position="24"/>
        <end position="52"/>
    </location>
</feature>
<feature type="peptide" id="PRO_5012094458" description="Contryphan-Ar2" evidence="6">
    <location>
        <begin position="53"/>
        <end position="62"/>
    </location>
</feature>
<feature type="peptide" id="PRO_0000445126" description="Contryphan-Ar1" evidence="6">
    <location>
        <begin position="54"/>
        <end position="62"/>
    </location>
</feature>
<feature type="modified residue" description="4-carboxyglutamate; partial" evidence="9">
    <location>
        <position position="55"/>
    </location>
</feature>
<feature type="modified residue" description="D-tryptophan" evidence="9">
    <location>
        <position position="58"/>
    </location>
</feature>
<feature type="modified residue" description="Cysteine amide" evidence="6">
    <location>
        <position position="62"/>
    </location>
</feature>
<feature type="disulfide bond" evidence="6">
    <location>
        <begin position="56"/>
        <end position="62"/>
    </location>
</feature>
<sequence length="63" mass="7085">MGKLTILVLVAAILLSTQVMVQGDRDQPADRNAVPRDVNPGRARRKLMKVLRESECPWKPWCG</sequence>
<organism>
    <name type="scientific">Conus araneosus</name>
    <name type="common">Cobweb cone</name>
    <dbReference type="NCBI Taxonomy" id="101286"/>
    <lineage>
        <taxon>Eukaryota</taxon>
        <taxon>Metazoa</taxon>
        <taxon>Spiralia</taxon>
        <taxon>Lophotrochozoa</taxon>
        <taxon>Mollusca</taxon>
        <taxon>Gastropoda</taxon>
        <taxon>Caenogastropoda</taxon>
        <taxon>Neogastropoda</taxon>
        <taxon>Conoidea</taxon>
        <taxon>Conidae</taxon>
        <taxon>Conus</taxon>
    </lineage>
</organism>
<evidence type="ECO:0000250" key="1">
    <source>
        <dbReference type="UniProtKB" id="P0C248"/>
    </source>
</evidence>
<evidence type="ECO:0000250" key="2">
    <source>
        <dbReference type="UniProtKB" id="P0C250"/>
    </source>
</evidence>
<evidence type="ECO:0000250" key="3">
    <source>
        <dbReference type="UniProtKB" id="P62903"/>
    </source>
</evidence>
<evidence type="ECO:0000250" key="4">
    <source>
        <dbReference type="UniProtKB" id="P83047"/>
    </source>
</evidence>
<evidence type="ECO:0000255" key="5"/>
<evidence type="ECO:0000269" key="6">
    <source>
    </source>
</evidence>
<evidence type="ECO:0000303" key="7">
    <source>
    </source>
</evidence>
<evidence type="ECO:0000305" key="8"/>
<evidence type="ECO:0000305" key="9">
    <source>
    </source>
</evidence>
<name>COW1_CONAO</name>